<protein>
    <recommendedName>
        <fullName evidence="2">Small ribosomal subunit protein uS12</fullName>
    </recommendedName>
    <alternativeName>
        <fullName evidence="3">30S ribosomal protein S12</fullName>
    </alternativeName>
</protein>
<name>RS12_PHOPR</name>
<feature type="chain" id="PRO_0000146284" description="Small ribosomal subunit protein uS12">
    <location>
        <begin position="1"/>
        <end position="124"/>
    </location>
</feature>
<feature type="modified residue" description="3-methylthioaspartic acid" evidence="1">
    <location>
        <position position="89"/>
    </location>
</feature>
<organism>
    <name type="scientific">Photobacterium profundum (strain SS9)</name>
    <dbReference type="NCBI Taxonomy" id="298386"/>
    <lineage>
        <taxon>Bacteria</taxon>
        <taxon>Pseudomonadati</taxon>
        <taxon>Pseudomonadota</taxon>
        <taxon>Gammaproteobacteria</taxon>
        <taxon>Vibrionales</taxon>
        <taxon>Vibrionaceae</taxon>
        <taxon>Photobacterium</taxon>
    </lineage>
</organism>
<reference key="1">
    <citation type="journal article" date="2005" name="Science">
        <title>Life at depth: Photobacterium profundum genome sequence and expression analysis.</title>
        <authorList>
            <person name="Vezzi A."/>
            <person name="Campanaro S."/>
            <person name="D'Angelo M."/>
            <person name="Simonato F."/>
            <person name="Vitulo N."/>
            <person name="Lauro F.M."/>
            <person name="Cestaro A."/>
            <person name="Malacrida G."/>
            <person name="Simionati B."/>
            <person name="Cannata N."/>
            <person name="Romualdi C."/>
            <person name="Bartlett D.H."/>
            <person name="Valle G."/>
        </authorList>
    </citation>
    <scope>NUCLEOTIDE SEQUENCE [LARGE SCALE GENOMIC DNA]</scope>
    <source>
        <strain>ATCC BAA-1253 / SS9</strain>
    </source>
</reference>
<evidence type="ECO:0000250" key="1"/>
<evidence type="ECO:0000255" key="2">
    <source>
        <dbReference type="HAMAP-Rule" id="MF_00403"/>
    </source>
</evidence>
<evidence type="ECO:0000305" key="3"/>
<accession>Q6LVC3</accession>
<proteinExistence type="inferred from homology"/>
<dbReference type="EMBL" id="CR378663">
    <property type="protein sequence ID" value="CAG18752.1"/>
    <property type="molecule type" value="Genomic_DNA"/>
</dbReference>
<dbReference type="RefSeq" id="WP_006233900.1">
    <property type="nucleotide sequence ID" value="NC_006370.1"/>
</dbReference>
<dbReference type="SMR" id="Q6LVC3"/>
<dbReference type="STRING" id="298386.PBPRA0313"/>
<dbReference type="KEGG" id="ppr:PBPRA0313"/>
<dbReference type="eggNOG" id="COG0048">
    <property type="taxonomic scope" value="Bacteria"/>
</dbReference>
<dbReference type="HOGENOM" id="CLU_104295_1_2_6"/>
<dbReference type="Proteomes" id="UP000000593">
    <property type="component" value="Chromosome 1"/>
</dbReference>
<dbReference type="GO" id="GO:0015935">
    <property type="term" value="C:small ribosomal subunit"/>
    <property type="evidence" value="ECO:0007669"/>
    <property type="project" value="InterPro"/>
</dbReference>
<dbReference type="GO" id="GO:0019843">
    <property type="term" value="F:rRNA binding"/>
    <property type="evidence" value="ECO:0007669"/>
    <property type="project" value="UniProtKB-UniRule"/>
</dbReference>
<dbReference type="GO" id="GO:0003735">
    <property type="term" value="F:structural constituent of ribosome"/>
    <property type="evidence" value="ECO:0007669"/>
    <property type="project" value="InterPro"/>
</dbReference>
<dbReference type="GO" id="GO:0000049">
    <property type="term" value="F:tRNA binding"/>
    <property type="evidence" value="ECO:0007669"/>
    <property type="project" value="UniProtKB-UniRule"/>
</dbReference>
<dbReference type="GO" id="GO:0006412">
    <property type="term" value="P:translation"/>
    <property type="evidence" value="ECO:0007669"/>
    <property type="project" value="UniProtKB-UniRule"/>
</dbReference>
<dbReference type="CDD" id="cd03368">
    <property type="entry name" value="Ribosomal_S12"/>
    <property type="match status" value="1"/>
</dbReference>
<dbReference type="FunFam" id="2.40.50.140:FF:000001">
    <property type="entry name" value="30S ribosomal protein S12"/>
    <property type="match status" value="1"/>
</dbReference>
<dbReference type="Gene3D" id="2.40.50.140">
    <property type="entry name" value="Nucleic acid-binding proteins"/>
    <property type="match status" value="1"/>
</dbReference>
<dbReference type="HAMAP" id="MF_00403_B">
    <property type="entry name" value="Ribosomal_uS12_B"/>
    <property type="match status" value="1"/>
</dbReference>
<dbReference type="InterPro" id="IPR012340">
    <property type="entry name" value="NA-bd_OB-fold"/>
</dbReference>
<dbReference type="InterPro" id="IPR006032">
    <property type="entry name" value="Ribosomal_uS12"/>
</dbReference>
<dbReference type="InterPro" id="IPR005679">
    <property type="entry name" value="Ribosomal_uS12_bac"/>
</dbReference>
<dbReference type="NCBIfam" id="TIGR00981">
    <property type="entry name" value="rpsL_bact"/>
    <property type="match status" value="1"/>
</dbReference>
<dbReference type="PANTHER" id="PTHR11652">
    <property type="entry name" value="30S RIBOSOMAL PROTEIN S12 FAMILY MEMBER"/>
    <property type="match status" value="1"/>
</dbReference>
<dbReference type="Pfam" id="PF00164">
    <property type="entry name" value="Ribosom_S12_S23"/>
    <property type="match status" value="1"/>
</dbReference>
<dbReference type="PIRSF" id="PIRSF002133">
    <property type="entry name" value="Ribosomal_S12/S23"/>
    <property type="match status" value="1"/>
</dbReference>
<dbReference type="PRINTS" id="PR01034">
    <property type="entry name" value="RIBOSOMALS12"/>
</dbReference>
<dbReference type="SUPFAM" id="SSF50249">
    <property type="entry name" value="Nucleic acid-binding proteins"/>
    <property type="match status" value="1"/>
</dbReference>
<dbReference type="PROSITE" id="PS00055">
    <property type="entry name" value="RIBOSOMAL_S12"/>
    <property type="match status" value="1"/>
</dbReference>
<keyword id="KW-0488">Methylation</keyword>
<keyword id="KW-1185">Reference proteome</keyword>
<keyword id="KW-0687">Ribonucleoprotein</keyword>
<keyword id="KW-0689">Ribosomal protein</keyword>
<keyword id="KW-0694">RNA-binding</keyword>
<keyword id="KW-0699">rRNA-binding</keyword>
<keyword id="KW-0820">tRNA-binding</keyword>
<sequence length="124" mass="13621">MATINQLVRKPRVKQVVKSNVPALAACPQKRGVCTRVYTTTPKKPNSALRKVCRVRLTNGFEVTSYIGGEGHNLQEHSVVLIRGGRVKDLPGVRYHTVRGALDCAGVNGRKKGRSKYGVKRPKS</sequence>
<comment type="function">
    <text evidence="2">With S4 and S5 plays an important role in translational accuracy.</text>
</comment>
<comment type="function">
    <text evidence="2">Interacts with and stabilizes bases of the 16S rRNA that are involved in tRNA selection in the A site and with the mRNA backbone. Located at the interface of the 30S and 50S subunits, it traverses the body of the 30S subunit contacting proteins on the other side and probably holding the rRNA structure together. The combined cluster of proteins S8, S12 and S17 appears to hold together the shoulder and platform of the 30S subunit.</text>
</comment>
<comment type="subunit">
    <text evidence="2">Part of the 30S ribosomal subunit. Contacts proteins S8 and S17. May interact with IF1 in the 30S initiation complex.</text>
</comment>
<comment type="similarity">
    <text evidence="2">Belongs to the universal ribosomal protein uS12 family.</text>
</comment>
<gene>
    <name evidence="2" type="primary">rpsL</name>
    <name type="ordered locus">PBPRA0313</name>
</gene>